<keyword id="KW-0687">Ribonucleoprotein</keyword>
<keyword id="KW-0689">Ribosomal protein</keyword>
<keyword id="KW-0694">RNA-binding</keyword>
<keyword id="KW-0699">rRNA-binding</keyword>
<sequence length="206" mass="22561">MDLTITTLEGKDAGKVKLNEEIFGLDPRDDILQRVVRWQLARRQQGSHKAQGRGDVSRTGSKMYKQKGTGRARHHSARAPQFRGGGQAHGPVVRNHDHDLPKKVRALGLRHALSAKAKASDLIIIDDLASADAKTKQLVSQFAKLGLENALLIGGAEIDANFQRAASNIPNIDVLPVQGINVYDILRRGKLVLSKAAVEALEERFK</sequence>
<organism>
    <name type="scientific">Brucella melitensis biotype 1 (strain ATCC 23456 / CCUG 17765 / NCTC 10094 / 16M)</name>
    <dbReference type="NCBI Taxonomy" id="224914"/>
    <lineage>
        <taxon>Bacteria</taxon>
        <taxon>Pseudomonadati</taxon>
        <taxon>Pseudomonadota</taxon>
        <taxon>Alphaproteobacteria</taxon>
        <taxon>Hyphomicrobiales</taxon>
        <taxon>Brucellaceae</taxon>
        <taxon>Brucella/Ochrobactrum group</taxon>
        <taxon>Brucella</taxon>
    </lineage>
</organism>
<gene>
    <name type="primary">rplD</name>
    <name type="ordered locus">BMEI0758</name>
</gene>
<evidence type="ECO:0000250" key="1"/>
<evidence type="ECO:0000256" key="2">
    <source>
        <dbReference type="SAM" id="MobiDB-lite"/>
    </source>
</evidence>
<evidence type="ECO:0000305" key="3"/>
<name>RL4_BRUME</name>
<reference key="1">
    <citation type="journal article" date="2002" name="Proc. Natl. Acad. Sci. U.S.A.">
        <title>The genome sequence of the facultative intracellular pathogen Brucella melitensis.</title>
        <authorList>
            <person name="DelVecchio V.G."/>
            <person name="Kapatral V."/>
            <person name="Redkar R.J."/>
            <person name="Patra G."/>
            <person name="Mujer C."/>
            <person name="Los T."/>
            <person name="Ivanova N."/>
            <person name="Anderson I."/>
            <person name="Bhattacharyya A."/>
            <person name="Lykidis A."/>
            <person name="Reznik G."/>
            <person name="Jablonski L."/>
            <person name="Larsen N."/>
            <person name="D'Souza M."/>
            <person name="Bernal A."/>
            <person name="Mazur M."/>
            <person name="Goltsman E."/>
            <person name="Selkov E."/>
            <person name="Elzer P.H."/>
            <person name="Hagius S."/>
            <person name="O'Callaghan D."/>
            <person name="Letesson J.-J."/>
            <person name="Haselkorn R."/>
            <person name="Kyrpides N.C."/>
            <person name="Overbeek R."/>
        </authorList>
    </citation>
    <scope>NUCLEOTIDE SEQUENCE [LARGE SCALE GENOMIC DNA]</scope>
    <source>
        <strain>ATCC 23456 / CCUG 17765 / NCTC 10094 / 16M</strain>
    </source>
</reference>
<dbReference type="EMBL" id="AE008917">
    <property type="protein sequence ID" value="AAL51939.1"/>
    <property type="status" value="ALT_FRAME"/>
    <property type="molecule type" value="Genomic_DNA"/>
</dbReference>
<dbReference type="PIR" id="AH3346">
    <property type="entry name" value="AH3346"/>
</dbReference>
<dbReference type="RefSeq" id="WP_002964361.1">
    <property type="nucleotide sequence ID" value="NZ_GG703780.1"/>
</dbReference>
<dbReference type="SMR" id="Q8YHN9"/>
<dbReference type="GeneID" id="93016440"/>
<dbReference type="KEGG" id="bme:BMEI0758"/>
<dbReference type="KEGG" id="bmel:DK63_664"/>
<dbReference type="PATRIC" id="fig|224914.52.peg.695"/>
<dbReference type="eggNOG" id="COG0088">
    <property type="taxonomic scope" value="Bacteria"/>
</dbReference>
<dbReference type="Proteomes" id="UP000000419">
    <property type="component" value="Chromosome I"/>
</dbReference>
<dbReference type="GO" id="GO:1990904">
    <property type="term" value="C:ribonucleoprotein complex"/>
    <property type="evidence" value="ECO:0007669"/>
    <property type="project" value="UniProtKB-KW"/>
</dbReference>
<dbReference type="GO" id="GO:0005840">
    <property type="term" value="C:ribosome"/>
    <property type="evidence" value="ECO:0007669"/>
    <property type="project" value="UniProtKB-KW"/>
</dbReference>
<dbReference type="GO" id="GO:0019843">
    <property type="term" value="F:rRNA binding"/>
    <property type="evidence" value="ECO:0007669"/>
    <property type="project" value="UniProtKB-UniRule"/>
</dbReference>
<dbReference type="GO" id="GO:0003735">
    <property type="term" value="F:structural constituent of ribosome"/>
    <property type="evidence" value="ECO:0007669"/>
    <property type="project" value="InterPro"/>
</dbReference>
<dbReference type="GO" id="GO:0006412">
    <property type="term" value="P:translation"/>
    <property type="evidence" value="ECO:0007669"/>
    <property type="project" value="UniProtKB-UniRule"/>
</dbReference>
<dbReference type="Gene3D" id="3.40.1370.10">
    <property type="match status" value="1"/>
</dbReference>
<dbReference type="HAMAP" id="MF_01328_B">
    <property type="entry name" value="Ribosomal_uL4_B"/>
    <property type="match status" value="1"/>
</dbReference>
<dbReference type="InterPro" id="IPR002136">
    <property type="entry name" value="Ribosomal_uL4"/>
</dbReference>
<dbReference type="InterPro" id="IPR013005">
    <property type="entry name" value="Ribosomal_uL4-like"/>
</dbReference>
<dbReference type="InterPro" id="IPR023574">
    <property type="entry name" value="Ribosomal_uL4_dom_sf"/>
</dbReference>
<dbReference type="NCBIfam" id="TIGR03953">
    <property type="entry name" value="rplD_bact"/>
    <property type="match status" value="1"/>
</dbReference>
<dbReference type="PANTHER" id="PTHR10746">
    <property type="entry name" value="50S RIBOSOMAL PROTEIN L4"/>
    <property type="match status" value="1"/>
</dbReference>
<dbReference type="PANTHER" id="PTHR10746:SF6">
    <property type="entry name" value="LARGE RIBOSOMAL SUBUNIT PROTEIN UL4M"/>
    <property type="match status" value="1"/>
</dbReference>
<dbReference type="Pfam" id="PF00573">
    <property type="entry name" value="Ribosomal_L4"/>
    <property type="match status" value="1"/>
</dbReference>
<dbReference type="SUPFAM" id="SSF52166">
    <property type="entry name" value="Ribosomal protein L4"/>
    <property type="match status" value="1"/>
</dbReference>
<proteinExistence type="inferred from homology"/>
<feature type="chain" id="PRO_0000129193" description="Large ribosomal subunit protein uL4">
    <location>
        <begin position="1"/>
        <end position="206"/>
    </location>
</feature>
<feature type="region of interest" description="Disordered" evidence="2">
    <location>
        <begin position="42"/>
        <end position="94"/>
    </location>
</feature>
<feature type="compositionally biased region" description="Basic residues" evidence="2">
    <location>
        <begin position="64"/>
        <end position="77"/>
    </location>
</feature>
<comment type="function">
    <text evidence="1">One of the primary rRNA binding proteins, this protein initially binds near the 5'-end of the 23S rRNA. It is important during the early stages of 50S assembly. It makes multiple contacts with different domains of the 23S rRNA in the assembled 50S subunit and ribosome (By similarity).</text>
</comment>
<comment type="function">
    <text evidence="1">Forms part of the polypeptide exit tunnel.</text>
</comment>
<comment type="subunit">
    <text evidence="1">Part of the 50S ribosomal subunit.</text>
</comment>
<comment type="similarity">
    <text evidence="3">Belongs to the universal ribosomal protein uL4 family.</text>
</comment>
<comment type="sequence caution" evidence="3">
    <conflict type="frameshift">
        <sequence resource="EMBL-CDS" id="AAL51939"/>
    </conflict>
</comment>
<protein>
    <recommendedName>
        <fullName evidence="3">Large ribosomal subunit protein uL4</fullName>
    </recommendedName>
    <alternativeName>
        <fullName>50S ribosomal protein L4</fullName>
    </alternativeName>
</protein>
<accession>Q8YHN9</accession>